<keyword id="KW-0002">3D-structure</keyword>
<keyword id="KW-0067">ATP-binding</keyword>
<keyword id="KW-0238">DNA-binding</keyword>
<keyword id="KW-0347">Helicase</keyword>
<keyword id="KW-0378">Hydrolase</keyword>
<keyword id="KW-0413">Isomerase</keyword>
<keyword id="KW-0547">Nucleotide-binding</keyword>
<keyword id="KW-1185">Reference proteome</keyword>
<gene>
    <name evidence="1" type="primary">recD2</name>
    <name type="ordered locus">DR_1902</name>
</gene>
<reference key="1">
    <citation type="journal article" date="1999" name="Science">
        <title>Genome sequence of the radioresistant bacterium Deinococcus radiodurans R1.</title>
        <authorList>
            <person name="White O."/>
            <person name="Eisen J.A."/>
            <person name="Heidelberg J.F."/>
            <person name="Hickey E.K."/>
            <person name="Peterson J.D."/>
            <person name="Dodson R.J."/>
            <person name="Haft D.H."/>
            <person name="Gwinn M.L."/>
            <person name="Nelson W.C."/>
            <person name="Richardson D.L."/>
            <person name="Moffat K.S."/>
            <person name="Qin H."/>
            <person name="Jiang L."/>
            <person name="Pamphile W."/>
            <person name="Crosby M."/>
            <person name="Shen M."/>
            <person name="Vamathevan J.J."/>
            <person name="Lam P."/>
            <person name="McDonald L.A."/>
            <person name="Utterback T.R."/>
            <person name="Zalewski C."/>
            <person name="Makarova K.S."/>
            <person name="Aravind L."/>
            <person name="Daly M.J."/>
            <person name="Minton K.W."/>
            <person name="Fleischmann R.D."/>
            <person name="Ketchum K.A."/>
            <person name="Nelson K.E."/>
            <person name="Salzberg S.L."/>
            <person name="Smith H.O."/>
            <person name="Venter J.C."/>
            <person name="Fraser C.M."/>
        </authorList>
    </citation>
    <scope>NUCLEOTIDE SEQUENCE [LARGE SCALE GENOMIC DNA]</scope>
    <source>
        <strain>ATCC 13939 / DSM 20539 / JCM 16871 / CCUG 27074 / LMG 4051 / NBRC 15346 / NCIMB 9279 / VKM B-1422 / R1</strain>
    </source>
</reference>
<reference key="2">
    <citation type="journal article" date="2004" name="J. Biol. Chem.">
        <title>DNA helicase activity of the RecD protein from Deinococcus radiodurans.</title>
        <authorList>
            <person name="Wang J."/>
            <person name="Julin D.A."/>
        </authorList>
    </citation>
    <scope>FUNCTION AS AN ATPASE</scope>
    <scope>FUNCTION AS A HELICASE</scope>
    <scope>CATALYTIC ACTIVITY</scope>
    <scope>BIOPHYSICOCHEMICAL PROPERTIES</scope>
    <scope>DNA-BINDING</scope>
    <source>
        <strain>ATCC 13939 / DSM 20539 / JCM 16871 / CCUG 27074 / LMG 4051 / NBRC 15346 / NCIMB 9279 / VKM B-1422 / R1</strain>
    </source>
</reference>
<reference key="3">
    <citation type="journal article" date="2007" name="FEMS Microbiol. Lett.">
        <title>A new role of Deinococcus radiodurans RecD in antioxidant pathway.</title>
        <authorList>
            <person name="Zhou Q."/>
            <person name="Zhang X."/>
            <person name="Xu H."/>
            <person name="Xu B."/>
            <person name="Hua Y."/>
        </authorList>
    </citation>
    <scope>FUNCTION</scope>
    <scope>DISRUPTION PHENOTYPE</scope>
    <source>
        <strain>ATCC 13939 / DSM 20539 / JCM 16871 / CCUG 27074 / LMG 4051 / NBRC 15346 / NCIMB 9279 / VKM B-1422 / R1</strain>
    </source>
</reference>
<reference key="4">
    <citation type="journal article" date="2007" name="J. Bacteriol.">
        <title>Effect of a recD mutation on DNA damage resistance and transformation in Deinococcus radiodurans.</title>
        <authorList>
            <person name="Servinsky M.D."/>
            <person name="Julin D.A."/>
        </authorList>
    </citation>
    <scope>FUNCTION</scope>
    <scope>DISRUPTION PHENOTYPE</scope>
    <source>
        <strain>ATCC 13939 / DSM 20539 / JCM 16871 / CCUG 27074 / LMG 4051 / NBRC 15346 / NCIMB 9279 / VKM B-1422 / R1</strain>
        <strain>BAA-816</strain>
    </source>
</reference>
<reference key="5">
    <citation type="journal article" date="2010" name="J. Biol. Chem.">
        <title>Kinetics of DNA unwinding by the RecD2 helicase from Deinococcus radiodurans.</title>
        <authorList>
            <person name="Shadrick W.R."/>
            <person name="Julin D.A."/>
        </authorList>
    </citation>
    <scope>FUNCTION</scope>
    <scope>CATALYTIC ACTIVITY</scope>
    <scope>SUBUNIT</scope>
    <scope>DNA-BINDING</scope>
</reference>
<reference key="6">
    <citation type="journal article" date="2014" name="J. Bacteriol.">
        <title>RecD2 helicase limits replication fork stress in Bacillus subtilis.</title>
        <authorList>
            <person name="Walsh B.W."/>
            <person name="Bolz S.A."/>
            <person name="Wessel S.R."/>
            <person name="Schroeder J.W."/>
            <person name="Keck J.L."/>
            <person name="Simmons L.A."/>
        </authorList>
    </citation>
    <scope>COMPARISON TO ORTHOLOGS</scope>
</reference>
<reference evidence="12" key="7">
    <citation type="journal article" date="2008" name="EMBO J.">
        <title>DNA binding to RecD: role of the 1B domain in SF1B helicase activity.</title>
        <authorList>
            <person name="Saikrishnan K."/>
            <person name="Griffiths S.P."/>
            <person name="Cook N."/>
            <person name="Court R."/>
            <person name="Wigley D.B."/>
        </authorList>
    </citation>
    <scope>X-RAY CRYSTALLOGRAPHY (2.20 ANGSTROMS) OF 151-715</scope>
    <scope>FUNCTION AS AN ATPASE</scope>
    <scope>FUNCTION AS A HELICASE</scope>
    <scope>CATALYTIC ACTIVITY</scope>
    <scope>DOMAIN</scope>
    <scope>MUTAGENESIS OF 412-LEU--PHE-419</scope>
</reference>
<reference evidence="13 14" key="8">
    <citation type="journal article" date="2009" name="Cell">
        <title>Mechanistic basis of 5'-3' translocation in SF1B helicases.</title>
        <authorList>
            <person name="Saikrishnan K."/>
            <person name="Powell B."/>
            <person name="Cook N.J."/>
            <person name="Webb M.R."/>
            <person name="Wigley D.B."/>
        </authorList>
    </citation>
    <scope>X-RAY CRYSTALLOGRAPHY (2.50 ANGSTROMS) OF 151-715 IN COMPLEX WITH DNA; MG(2+) AND ATP ANALOG</scope>
    <scope>FUNCTION</scope>
    <scope>MECHANISM</scope>
    <scope>CATALYTIC ACTIVITY</scope>
    <scope>MUTAGENESIS OF ASN-596; TYR-598 AND ASN-604</scope>
</reference>
<proteinExistence type="evidence at protein level"/>
<dbReference type="EC" id="5.6.2.3" evidence="1 2 5 6"/>
<dbReference type="EMBL" id="AE000513">
    <property type="protein sequence ID" value="AAF11453.1"/>
    <property type="molecule type" value="Genomic_DNA"/>
</dbReference>
<dbReference type="PIR" id="G75339">
    <property type="entry name" value="G75339"/>
</dbReference>
<dbReference type="RefSeq" id="NP_295625.1">
    <property type="nucleotide sequence ID" value="NC_001263.1"/>
</dbReference>
<dbReference type="RefSeq" id="WP_010888537.1">
    <property type="nucleotide sequence ID" value="NC_001263.1"/>
</dbReference>
<dbReference type="PDB" id="3E1S">
    <property type="method" value="X-ray"/>
    <property type="resolution" value="2.20 A"/>
    <property type="chains" value="A=151-715"/>
</dbReference>
<dbReference type="PDB" id="3GP8">
    <property type="method" value="X-ray"/>
    <property type="resolution" value="2.50 A"/>
    <property type="chains" value="A=151-715"/>
</dbReference>
<dbReference type="PDB" id="3GPL">
    <property type="method" value="X-ray"/>
    <property type="resolution" value="2.50 A"/>
    <property type="chains" value="A/B=151-715"/>
</dbReference>
<dbReference type="PDBsum" id="3E1S"/>
<dbReference type="PDBsum" id="3GP8"/>
<dbReference type="PDBsum" id="3GPL"/>
<dbReference type="SMR" id="Q9RT63"/>
<dbReference type="FunCoup" id="Q9RT63">
    <property type="interactions" value="146"/>
</dbReference>
<dbReference type="STRING" id="243230.DR_1902"/>
<dbReference type="PaxDb" id="243230-DR_1902"/>
<dbReference type="EnsemblBacteria" id="AAF11453">
    <property type="protein sequence ID" value="AAF11453"/>
    <property type="gene ID" value="DR_1902"/>
</dbReference>
<dbReference type="GeneID" id="69518142"/>
<dbReference type="KEGG" id="dra:DR_1902"/>
<dbReference type="PATRIC" id="fig|243230.17.peg.2117"/>
<dbReference type="eggNOG" id="COG0507">
    <property type="taxonomic scope" value="Bacteria"/>
</dbReference>
<dbReference type="HOGENOM" id="CLU_007524_0_3_0"/>
<dbReference type="InParanoid" id="Q9RT63"/>
<dbReference type="OrthoDB" id="9803432at2"/>
<dbReference type="BRENDA" id="3.6.4.12">
    <property type="organism ID" value="1856"/>
</dbReference>
<dbReference type="EvolutionaryTrace" id="Q9RT63"/>
<dbReference type="Proteomes" id="UP000002524">
    <property type="component" value="Chromosome 1"/>
</dbReference>
<dbReference type="GO" id="GO:0009338">
    <property type="term" value="C:exodeoxyribonuclease V complex"/>
    <property type="evidence" value="ECO:0000318"/>
    <property type="project" value="GO_Central"/>
</dbReference>
<dbReference type="GO" id="GO:0043139">
    <property type="term" value="F:5'-3' DNA helicase activity"/>
    <property type="evidence" value="ECO:0000314"/>
    <property type="project" value="UniProtKB"/>
</dbReference>
<dbReference type="GO" id="GO:0005524">
    <property type="term" value="F:ATP binding"/>
    <property type="evidence" value="ECO:0007669"/>
    <property type="project" value="UniProtKB-UniRule"/>
</dbReference>
<dbReference type="GO" id="GO:0016887">
    <property type="term" value="F:ATP hydrolysis activity"/>
    <property type="evidence" value="ECO:0007669"/>
    <property type="project" value="InterPro"/>
</dbReference>
<dbReference type="GO" id="GO:0008094">
    <property type="term" value="F:ATP-dependent activity, acting on DNA"/>
    <property type="evidence" value="ECO:0000314"/>
    <property type="project" value="UniProtKB"/>
</dbReference>
<dbReference type="GO" id="GO:0003677">
    <property type="term" value="F:DNA binding"/>
    <property type="evidence" value="ECO:0000314"/>
    <property type="project" value="UniProtKB"/>
</dbReference>
<dbReference type="GO" id="GO:0017116">
    <property type="term" value="F:single-stranded DNA helicase activity"/>
    <property type="evidence" value="ECO:0000318"/>
    <property type="project" value="GO_Central"/>
</dbReference>
<dbReference type="GO" id="GO:0006310">
    <property type="term" value="P:DNA recombination"/>
    <property type="evidence" value="ECO:0000318"/>
    <property type="project" value="GO_Central"/>
</dbReference>
<dbReference type="CDD" id="cd17933">
    <property type="entry name" value="DEXSc_RecD-like"/>
    <property type="match status" value="1"/>
</dbReference>
<dbReference type="CDD" id="cd18809">
    <property type="entry name" value="SF1_C_RecD"/>
    <property type="match status" value="1"/>
</dbReference>
<dbReference type="FunFam" id="3.40.50.300:FF:004245">
    <property type="entry name" value="ATP-dependent RecD-like DNA helicase"/>
    <property type="match status" value="1"/>
</dbReference>
<dbReference type="Gene3D" id="1.10.10.2220">
    <property type="match status" value="1"/>
</dbReference>
<dbReference type="Gene3D" id="2.30.30.940">
    <property type="match status" value="1"/>
</dbReference>
<dbReference type="Gene3D" id="3.40.50.300">
    <property type="entry name" value="P-loop containing nucleotide triphosphate hydrolases"/>
    <property type="match status" value="2"/>
</dbReference>
<dbReference type="HAMAP" id="MF_01488">
    <property type="entry name" value="RecD2"/>
    <property type="match status" value="1"/>
</dbReference>
<dbReference type="InterPro" id="IPR003593">
    <property type="entry name" value="AAA+_ATPase"/>
</dbReference>
<dbReference type="InterPro" id="IPR050534">
    <property type="entry name" value="Coronavir_polyprotein_1ab"/>
</dbReference>
<dbReference type="InterPro" id="IPR027417">
    <property type="entry name" value="P-loop_NTPase"/>
</dbReference>
<dbReference type="InterPro" id="IPR006345">
    <property type="entry name" value="RecD2"/>
</dbReference>
<dbReference type="InterPro" id="IPR029493">
    <property type="entry name" value="RecD2-like_HHH"/>
</dbReference>
<dbReference type="InterPro" id="IPR055446">
    <property type="entry name" value="RecD2_N_OB"/>
</dbReference>
<dbReference type="InterPro" id="IPR041451">
    <property type="entry name" value="RecD2_SH13"/>
</dbReference>
<dbReference type="InterPro" id="IPR027785">
    <property type="entry name" value="UvrD-like_helicase_C"/>
</dbReference>
<dbReference type="NCBIfam" id="TIGR01448">
    <property type="entry name" value="recD_rel"/>
    <property type="match status" value="1"/>
</dbReference>
<dbReference type="PANTHER" id="PTHR43788:SF6">
    <property type="entry name" value="DNA HELICASE B"/>
    <property type="match status" value="1"/>
</dbReference>
<dbReference type="PANTHER" id="PTHR43788">
    <property type="entry name" value="DNA2/NAM7 HELICASE FAMILY MEMBER"/>
    <property type="match status" value="1"/>
</dbReference>
<dbReference type="Pfam" id="PF13604">
    <property type="entry name" value="AAA_30"/>
    <property type="match status" value="1"/>
</dbReference>
<dbReference type="Pfam" id="PF14520">
    <property type="entry name" value="HHH_5"/>
    <property type="match status" value="1"/>
</dbReference>
<dbReference type="Pfam" id="PF14490">
    <property type="entry name" value="HHH_RecD2"/>
    <property type="match status" value="1"/>
</dbReference>
<dbReference type="Pfam" id="PF23139">
    <property type="entry name" value="OB_YrrC"/>
    <property type="match status" value="1"/>
</dbReference>
<dbReference type="Pfam" id="PF18335">
    <property type="entry name" value="SH3_13"/>
    <property type="match status" value="1"/>
</dbReference>
<dbReference type="Pfam" id="PF13538">
    <property type="entry name" value="UvrD_C_2"/>
    <property type="match status" value="1"/>
</dbReference>
<dbReference type="SMART" id="SM00382">
    <property type="entry name" value="AAA"/>
    <property type="match status" value="1"/>
</dbReference>
<dbReference type="SUPFAM" id="SSF52540">
    <property type="entry name" value="P-loop containing nucleoside triphosphate hydrolases"/>
    <property type="match status" value="2"/>
</dbReference>
<accession>Q9RT63</accession>
<feature type="chain" id="PRO_0000425413" description="ATP-dependent RecD2 DNA helicase">
    <location>
        <begin position="1"/>
        <end position="715"/>
    </location>
</feature>
<feature type="DNA-binding region">
    <location>
        <position position="391"/>
    </location>
</feature>
<feature type="DNA-binding region">
    <location>
        <begin position="407"/>
        <end position="414"/>
    </location>
</feature>
<feature type="DNA-binding region">
    <location>
        <position position="470"/>
    </location>
</feature>
<feature type="DNA-binding region">
    <location>
        <begin position="554"/>
        <end position="555"/>
    </location>
</feature>
<feature type="DNA-binding region">
    <location>
        <begin position="596"/>
        <end position="604"/>
    </location>
</feature>
<feature type="DNA-binding region">
    <location>
        <begin position="644"/>
        <end position="647"/>
    </location>
</feature>
<feature type="region of interest" description="Not required for helicase activity" evidence="5">
    <location>
        <begin position="1"/>
        <end position="150"/>
    </location>
</feature>
<feature type="binding site" evidence="6">
    <location>
        <position position="343"/>
    </location>
    <ligand>
        <name>ATP</name>
        <dbReference type="ChEBI" id="CHEBI:30616"/>
    </ligand>
</feature>
<feature type="binding site" evidence="1 6">
    <location>
        <begin position="363"/>
        <end position="367"/>
    </location>
    <ligand>
        <name>ATP</name>
        <dbReference type="ChEBI" id="CHEBI:30616"/>
    </ligand>
</feature>
<feature type="binding site" evidence="6">
    <location>
        <position position="466"/>
    </location>
    <ligand>
        <name>ATP</name>
        <dbReference type="ChEBI" id="CHEBI:30616"/>
    </ligand>
</feature>
<feature type="binding site" evidence="6">
    <location>
        <position position="493"/>
    </location>
    <ligand>
        <name>ATP</name>
        <dbReference type="ChEBI" id="CHEBI:30616"/>
    </ligand>
</feature>
<feature type="binding site" evidence="6">
    <location>
        <position position="679"/>
    </location>
    <ligand>
        <name>ATP</name>
        <dbReference type="ChEBI" id="CHEBI:30616"/>
    </ligand>
</feature>
<feature type="mutagenesis site" description="Loss of helicase, little effect on DNA-binding or DNA-dependent ATPase." evidence="5">
    <original>LGYGPQGF</original>
    <variation>G</variation>
    <location>
        <begin position="412"/>
        <end position="419"/>
    </location>
</feature>
<feature type="mutagenesis site" description="Loss of helicase." evidence="6">
    <original>N</original>
    <variation>A</variation>
    <location>
        <position position="596"/>
    </location>
</feature>
<feature type="mutagenesis site" description="Loss of helicase." evidence="6">
    <original>Y</original>
    <variation>A</variation>
    <location>
        <position position="598"/>
    </location>
</feature>
<feature type="mutagenesis site" description="10-fold reduction in helicase." evidence="6">
    <original>N</original>
    <variation>A</variation>
    <location>
        <position position="604"/>
    </location>
</feature>
<feature type="helix" evidence="16">
    <location>
        <begin position="157"/>
        <end position="165"/>
    </location>
</feature>
<feature type="helix" evidence="16">
    <location>
        <begin position="170"/>
        <end position="180"/>
    </location>
</feature>
<feature type="helix" evidence="16">
    <location>
        <begin position="184"/>
        <end position="190"/>
    </location>
</feature>
<feature type="helix" evidence="15">
    <location>
        <begin position="194"/>
        <end position="196"/>
    </location>
</feature>
<feature type="strand" evidence="15">
    <location>
        <begin position="198"/>
        <end position="200"/>
    </location>
</feature>
<feature type="helix" evidence="15">
    <location>
        <begin position="203"/>
        <end position="207"/>
    </location>
</feature>
<feature type="helix" evidence="15">
    <location>
        <begin position="220"/>
        <end position="237"/>
    </location>
</feature>
<feature type="helix" evidence="15">
    <location>
        <begin position="245"/>
        <end position="256"/>
    </location>
</feature>
<feature type="helix" evidence="15">
    <location>
        <begin position="260"/>
        <end position="272"/>
    </location>
</feature>
<feature type="strand" evidence="15">
    <location>
        <begin position="275"/>
        <end position="279"/>
    </location>
</feature>
<feature type="turn" evidence="16">
    <location>
        <begin position="288"/>
        <end position="292"/>
    </location>
</feature>
<feature type="strand" evidence="15">
    <location>
        <begin position="295"/>
        <end position="297"/>
    </location>
</feature>
<feature type="helix" evidence="15">
    <location>
        <begin position="299"/>
        <end position="317"/>
    </location>
</feature>
<feature type="turn" evidence="15">
    <location>
        <begin position="333"/>
        <end position="338"/>
    </location>
</feature>
<feature type="helix" evidence="15">
    <location>
        <begin position="341"/>
        <end position="350"/>
    </location>
</feature>
<feature type="strand" evidence="15">
    <location>
        <begin position="354"/>
        <end position="359"/>
    </location>
</feature>
<feature type="helix" evidence="15">
    <location>
        <begin position="366"/>
        <end position="379"/>
    </location>
</feature>
<feature type="strand" evidence="15">
    <location>
        <begin position="384"/>
        <end position="390"/>
    </location>
</feature>
<feature type="helix" evidence="15">
    <location>
        <begin position="391"/>
        <end position="401"/>
    </location>
</feature>
<feature type="strand" evidence="15">
    <location>
        <begin position="405"/>
        <end position="407"/>
    </location>
</feature>
<feature type="helix" evidence="15">
    <location>
        <begin position="408"/>
        <end position="411"/>
    </location>
</feature>
<feature type="strand" evidence="15">
    <location>
        <begin position="418"/>
        <end position="420"/>
    </location>
</feature>
<feature type="strand" evidence="15">
    <location>
        <begin position="422"/>
        <end position="425"/>
    </location>
</feature>
<feature type="strand" evidence="15">
    <location>
        <begin position="430"/>
        <end position="434"/>
    </location>
</feature>
<feature type="helix" evidence="15">
    <location>
        <begin position="437"/>
        <end position="439"/>
    </location>
</feature>
<feature type="helix" evidence="15">
    <location>
        <begin position="442"/>
        <end position="449"/>
    </location>
</feature>
<feature type="strand" evidence="15">
    <location>
        <begin position="457"/>
        <end position="462"/>
    </location>
</feature>
<feature type="strand" evidence="15">
    <location>
        <begin position="470"/>
        <end position="472"/>
    </location>
</feature>
<feature type="helix" evidence="15">
    <location>
        <begin position="475"/>
        <end position="482"/>
    </location>
</feature>
<feature type="strand" evidence="15">
    <location>
        <begin position="485"/>
        <end position="487"/>
    </location>
</feature>
<feature type="helix" evidence="15">
    <location>
        <begin position="493"/>
        <end position="496"/>
    </location>
</feature>
<feature type="helix" evidence="15">
    <location>
        <begin position="499"/>
        <end position="508"/>
    </location>
</feature>
<feature type="strand" evidence="15">
    <location>
        <begin position="520"/>
        <end position="524"/>
    </location>
</feature>
<feature type="helix" evidence="15">
    <location>
        <begin position="531"/>
        <end position="540"/>
    </location>
</feature>
<feature type="helix" evidence="15">
    <location>
        <begin position="544"/>
        <end position="546"/>
    </location>
</feature>
<feature type="strand" evidence="15">
    <location>
        <begin position="548"/>
        <end position="552"/>
    </location>
</feature>
<feature type="strand" evidence="15">
    <location>
        <begin position="554"/>
        <end position="556"/>
    </location>
</feature>
<feature type="helix" evidence="15">
    <location>
        <begin position="560"/>
        <end position="571"/>
    </location>
</feature>
<feature type="strand" evidence="15">
    <location>
        <begin position="581"/>
        <end position="585"/>
    </location>
</feature>
<feature type="strand" evidence="15">
    <location>
        <begin position="590"/>
        <end position="593"/>
    </location>
</feature>
<feature type="turn" evidence="15">
    <location>
        <begin position="598"/>
        <end position="601"/>
    </location>
</feature>
<feature type="strand" evidence="15">
    <location>
        <begin position="607"/>
        <end position="613"/>
    </location>
</feature>
<feature type="strand" evidence="15">
    <location>
        <begin position="618"/>
        <end position="622"/>
    </location>
</feature>
<feature type="strand" evidence="15">
    <location>
        <begin position="625"/>
        <end position="629"/>
    </location>
</feature>
<feature type="helix" evidence="15">
    <location>
        <begin position="631"/>
        <end position="634"/>
    </location>
</feature>
<feature type="strand" evidence="15">
    <location>
        <begin position="637"/>
        <end position="639"/>
    </location>
</feature>
<feature type="strand" evidence="15">
    <location>
        <begin position="641"/>
        <end position="644"/>
    </location>
</feature>
<feature type="helix" evidence="15">
    <location>
        <begin position="645"/>
        <end position="648"/>
    </location>
</feature>
<feature type="strand" evidence="15">
    <location>
        <begin position="653"/>
        <end position="660"/>
    </location>
</feature>
<feature type="helix" evidence="15">
    <location>
        <begin position="662"/>
        <end position="667"/>
    </location>
</feature>
<feature type="helix" evidence="15">
    <location>
        <begin position="670"/>
        <end position="678"/>
    </location>
</feature>
<feature type="strand" evidence="15">
    <location>
        <begin position="680"/>
        <end position="688"/>
    </location>
</feature>
<feature type="helix" evidence="15">
    <location>
        <begin position="690"/>
        <end position="698"/>
    </location>
</feature>
<feature type="helix" evidence="15">
    <location>
        <begin position="708"/>
        <end position="715"/>
    </location>
</feature>
<organism>
    <name type="scientific">Deinococcus radiodurans (strain ATCC 13939 / DSM 20539 / JCM 16871 / CCUG 27074 / LMG 4051 / NBRC 15346 / NCIMB 9279 / VKM B-1422 / R1)</name>
    <dbReference type="NCBI Taxonomy" id="243230"/>
    <lineage>
        <taxon>Bacteria</taxon>
        <taxon>Thermotogati</taxon>
        <taxon>Deinococcota</taxon>
        <taxon>Deinococci</taxon>
        <taxon>Deinococcales</taxon>
        <taxon>Deinococcaceae</taxon>
        <taxon>Deinococcus</taxon>
    </lineage>
</organism>
<name>RECD2_DEIRA</name>
<sequence>MSAALPAEPFRVSGGVNKVRFRSDTGFTVMSATLRNEQGEDPDATVIGVMPPLDVGDTFSAEVLMEEHREYGYQYRVVNMVLEAMPADLSEEGVAAYFEARVGGVGKVLAGRIAKTFGAAAFDLLEDDPQKFLQVPGITESTLHKMVSSWSQQGLERRLLAGLQGLGLTINQAQRAVKHFGADALDRLEKDLFTLTEVEGIGFLTADKLWQARGGALDDPRRLTAAAVYALQLAGTQAGHSFLPRSRAEKGVVHYTRVTPGQARLAVETAVELGRLSEDDSPLFAAEAAATGEGRIYLPHVLRAEKKLASLIRTLLATPPADGAGNDDWAVPKKARKGLSEEQASVLDQLAGHRLVVLTGGPGTGKSTTTKAVADLAESLGLEVGLCAPTGKAARRLGEVTGRTASTVHRLLGYGPQGFRHNHLEPAPYDLLIVDEVSMMGDALMLSLLAAVPPGARVLLVGDTDQLPPVDAGLPLLALAQAAPTIKLTQVYRQAAKNPIIQAAHGLLHGEAPAWGDKRLNLTEIEPDGGARRVALMVRELGGPGAVQVLTPMRKGPLGMDHLNYHLQALFNPGEGGVRIAEGEARPGDTVVQTKNDYNNEIFNGTLGMVLKAEGARLTVDFDGNVVELTGAELFNLQLGYALTVHRAQGSEWGTVLGVLHEAHMPMLSRNLVYTALTRARDRFFSAGSASAWQIAAARQREARNTALLERIRAH</sequence>
<protein>
    <recommendedName>
        <fullName evidence="1 9">ATP-dependent RecD2 DNA helicase</fullName>
        <ecNumber evidence="1 2 5 6">5.6.2.3</ecNumber>
    </recommendedName>
    <alternativeName>
        <fullName evidence="10">DNA 5'-3' helicase RecD2</fullName>
    </alternativeName>
</protein>
<comment type="function">
    <text evidence="2 3 4 6 7">DNA-dependent ATPase (ssDNA stimulates the ATPase better than dsDNA) and ATP-dependent 5'-3' DNA helicase (PubMed:15466873, PubMed:19490894). Plays a role in an antioxidant pathway (PubMed:17419762). Involved in DNA damage repair and/or recombination (PubMed:17496087). Appears to move along DNA in single base steps, powered by hydrolysis of 1 molecule of ATP (PubMed:19490894). Has low processivity, unwinds about 15-20 base pairs/second (PubMed:15466873, PubMed:20360003). Short (20 bp) substrates with 5'-overhangs or forked ends are the best substrates, is much less efficient on 52 or 76 bp substrates with 5'-overhangs (PubMed:15466873). The presence of single-stranded DNA-binding protein (SSB) increases unwinding 4-5 fold (PubMed:15466873). Has no activity on blunt DNA or DNA with 3'-overhangs (PubMed:15466873). Requires at least 10 bases of 5'-ssDNA for helicase activity (PubMed:15466873).</text>
</comment>
<comment type="catalytic activity">
    <reaction evidence="2 5 6 7">
        <text>Couples ATP hydrolysis with the unwinding of duplex DNA at the replication fork by translocating in the 5'-3' direction. This creates two antiparallel DNA single strands (ssDNA). The leading ssDNA polymer is the template for DNA polymerase III holoenzyme which synthesizes a continuous strand.</text>
        <dbReference type="EC" id="5.6.2.3"/>
    </reaction>
</comment>
<comment type="catalytic activity">
    <reaction evidence="2 5 6">
        <text>ATP + H2O = ADP + phosphate + H(+)</text>
        <dbReference type="Rhea" id="RHEA:13065"/>
        <dbReference type="ChEBI" id="CHEBI:15377"/>
        <dbReference type="ChEBI" id="CHEBI:15378"/>
        <dbReference type="ChEBI" id="CHEBI:30616"/>
        <dbReference type="ChEBI" id="CHEBI:43474"/>
        <dbReference type="ChEBI" id="CHEBI:456216"/>
        <dbReference type="EC" id="5.6.2.3"/>
    </reaction>
</comment>
<comment type="biophysicochemical properties">
    <phDependence>
        <text evidence="2">Optimum pH is 6.3 to 6.5 for unwinding of a 56 bp substrate and DNA hairpin binding.</text>
    </phDependence>
</comment>
<comment type="subunit">
    <text evidence="7">Monomer; homodimers seem to be inactive (PubMed:20360003).</text>
</comment>
<comment type="disruption phenotype">
    <text evidence="3 4">No significant change in resistance to gamma radiation, slightly increased sensitivity to UV radiation but remarkably decreased resistance to H(2)O(2), 50% reduced catalase B activity (PubMed:17419762). Normal growth in the absence of DNA damage, increased sensitivity to gamma irradiation, UV light and H(2)O(2), greater efficiency of transformation by exogenous homologous DNA (PubMed:17496087). No change in sensitivity to mitomycin C (MMC) or methyl methanesulfonate (MMS) (PubMed:17496087).</text>
</comment>
<comment type="miscellaneous">
    <text>There are no RecB or RecC proteins in this organism.</text>
</comment>
<comment type="miscellaneous">
    <text evidence="8">In B.anthracis it is involved in mismatch repair, in B.subtilis it is involved in replication fork progression (PubMed:24443534).</text>
</comment>
<comment type="similarity">
    <text evidence="1 11">Belongs to the RecD family. RecD2 subfamily.</text>
</comment>
<evidence type="ECO:0000255" key="1">
    <source>
        <dbReference type="HAMAP-Rule" id="MF_01488"/>
    </source>
</evidence>
<evidence type="ECO:0000269" key="2">
    <source>
    </source>
</evidence>
<evidence type="ECO:0000269" key="3">
    <source>
    </source>
</evidence>
<evidence type="ECO:0000269" key="4">
    <source>
    </source>
</evidence>
<evidence type="ECO:0000269" key="5">
    <source>
    </source>
</evidence>
<evidence type="ECO:0000269" key="6">
    <source>
    </source>
</evidence>
<evidence type="ECO:0000269" key="7">
    <source>
    </source>
</evidence>
<evidence type="ECO:0000269" key="8">
    <source>
    </source>
</evidence>
<evidence type="ECO:0000303" key="9">
    <source>
    </source>
</evidence>
<evidence type="ECO:0000305" key="10"/>
<evidence type="ECO:0000305" key="11">
    <source>
    </source>
</evidence>
<evidence type="ECO:0007744" key="12">
    <source>
        <dbReference type="PDB" id="3E1S"/>
    </source>
</evidence>
<evidence type="ECO:0007744" key="13">
    <source>
        <dbReference type="PDB" id="3GP8"/>
    </source>
</evidence>
<evidence type="ECO:0007744" key="14">
    <source>
        <dbReference type="PDB" id="3GPL"/>
    </source>
</evidence>
<evidence type="ECO:0007829" key="15">
    <source>
        <dbReference type="PDB" id="3E1S"/>
    </source>
</evidence>
<evidence type="ECO:0007829" key="16">
    <source>
        <dbReference type="PDB" id="3GP8"/>
    </source>
</evidence>